<feature type="chain" id="PRO_1000078483" description="Large ribosomal subunit protein bL36">
    <location>
        <begin position="1"/>
        <end position="37"/>
    </location>
</feature>
<gene>
    <name evidence="1" type="primary">rpmJ</name>
    <name type="ordered locus">Sare_4290</name>
</gene>
<proteinExistence type="inferred from homology"/>
<comment type="similarity">
    <text evidence="1">Belongs to the bacterial ribosomal protein bL36 family.</text>
</comment>
<evidence type="ECO:0000255" key="1">
    <source>
        <dbReference type="HAMAP-Rule" id="MF_00251"/>
    </source>
</evidence>
<evidence type="ECO:0000305" key="2"/>
<sequence>MKVKPSVKRICNKCRVIRRHGRVMVICTDPRHKQRQG</sequence>
<accession>A8M504</accession>
<name>RL36_SALAI</name>
<reference key="1">
    <citation type="submission" date="2007-10" db="EMBL/GenBank/DDBJ databases">
        <title>Complete sequence of Salinispora arenicola CNS-205.</title>
        <authorList>
            <consortium name="US DOE Joint Genome Institute"/>
            <person name="Copeland A."/>
            <person name="Lucas S."/>
            <person name="Lapidus A."/>
            <person name="Barry K."/>
            <person name="Glavina del Rio T."/>
            <person name="Dalin E."/>
            <person name="Tice H."/>
            <person name="Pitluck S."/>
            <person name="Foster B."/>
            <person name="Schmutz J."/>
            <person name="Larimer F."/>
            <person name="Land M."/>
            <person name="Hauser L."/>
            <person name="Kyrpides N."/>
            <person name="Ivanova N."/>
            <person name="Jensen P.R."/>
            <person name="Moore B.S."/>
            <person name="Penn K."/>
            <person name="Jenkins C."/>
            <person name="Udwary D."/>
            <person name="Xiang L."/>
            <person name="Gontang E."/>
            <person name="Richardson P."/>
        </authorList>
    </citation>
    <scope>NUCLEOTIDE SEQUENCE [LARGE SCALE GENOMIC DNA]</scope>
    <source>
        <strain>CNS-205</strain>
    </source>
</reference>
<protein>
    <recommendedName>
        <fullName evidence="1">Large ribosomal subunit protein bL36</fullName>
    </recommendedName>
    <alternativeName>
        <fullName evidence="2">50S ribosomal protein L36</fullName>
    </alternativeName>
</protein>
<organism>
    <name type="scientific">Salinispora arenicola (strain CNS-205)</name>
    <dbReference type="NCBI Taxonomy" id="391037"/>
    <lineage>
        <taxon>Bacteria</taxon>
        <taxon>Bacillati</taxon>
        <taxon>Actinomycetota</taxon>
        <taxon>Actinomycetes</taxon>
        <taxon>Micromonosporales</taxon>
        <taxon>Micromonosporaceae</taxon>
        <taxon>Salinispora</taxon>
    </lineage>
</organism>
<dbReference type="EMBL" id="CP000850">
    <property type="protein sequence ID" value="ABW00072.1"/>
    <property type="molecule type" value="Genomic_DNA"/>
</dbReference>
<dbReference type="SMR" id="A8M504"/>
<dbReference type="STRING" id="391037.Sare_4290"/>
<dbReference type="KEGG" id="saq:Sare_4290"/>
<dbReference type="eggNOG" id="COG0257">
    <property type="taxonomic scope" value="Bacteria"/>
</dbReference>
<dbReference type="HOGENOM" id="CLU_135723_6_2_11"/>
<dbReference type="OrthoDB" id="9802520at2"/>
<dbReference type="GO" id="GO:0005737">
    <property type="term" value="C:cytoplasm"/>
    <property type="evidence" value="ECO:0007669"/>
    <property type="project" value="UniProtKB-ARBA"/>
</dbReference>
<dbReference type="GO" id="GO:1990904">
    <property type="term" value="C:ribonucleoprotein complex"/>
    <property type="evidence" value="ECO:0007669"/>
    <property type="project" value="UniProtKB-KW"/>
</dbReference>
<dbReference type="GO" id="GO:0005840">
    <property type="term" value="C:ribosome"/>
    <property type="evidence" value="ECO:0007669"/>
    <property type="project" value="UniProtKB-KW"/>
</dbReference>
<dbReference type="GO" id="GO:0003735">
    <property type="term" value="F:structural constituent of ribosome"/>
    <property type="evidence" value="ECO:0007669"/>
    <property type="project" value="InterPro"/>
</dbReference>
<dbReference type="GO" id="GO:0006412">
    <property type="term" value="P:translation"/>
    <property type="evidence" value="ECO:0007669"/>
    <property type="project" value="UniProtKB-UniRule"/>
</dbReference>
<dbReference type="HAMAP" id="MF_00251">
    <property type="entry name" value="Ribosomal_bL36"/>
    <property type="match status" value="1"/>
</dbReference>
<dbReference type="InterPro" id="IPR000473">
    <property type="entry name" value="Ribosomal_bL36"/>
</dbReference>
<dbReference type="InterPro" id="IPR035977">
    <property type="entry name" value="Ribosomal_bL36_sp"/>
</dbReference>
<dbReference type="NCBIfam" id="TIGR01022">
    <property type="entry name" value="rpmJ_bact"/>
    <property type="match status" value="1"/>
</dbReference>
<dbReference type="PANTHER" id="PTHR42888">
    <property type="entry name" value="50S RIBOSOMAL PROTEIN L36, CHLOROPLASTIC"/>
    <property type="match status" value="1"/>
</dbReference>
<dbReference type="PANTHER" id="PTHR42888:SF1">
    <property type="entry name" value="LARGE RIBOSOMAL SUBUNIT PROTEIN BL36C"/>
    <property type="match status" value="1"/>
</dbReference>
<dbReference type="Pfam" id="PF00444">
    <property type="entry name" value="Ribosomal_L36"/>
    <property type="match status" value="1"/>
</dbReference>
<dbReference type="SUPFAM" id="SSF57840">
    <property type="entry name" value="Ribosomal protein L36"/>
    <property type="match status" value="1"/>
</dbReference>
<dbReference type="PROSITE" id="PS00828">
    <property type="entry name" value="RIBOSOMAL_L36"/>
    <property type="match status" value="1"/>
</dbReference>
<keyword id="KW-0687">Ribonucleoprotein</keyword>
<keyword id="KW-0689">Ribosomal protein</keyword>